<evidence type="ECO:0000250" key="1"/>
<evidence type="ECO:0000255" key="2"/>
<evidence type="ECO:0000305" key="3"/>
<feature type="chain" id="PRO_0000371705" description="Putative pectinesterase 57">
    <location>
        <begin position="1"/>
        <end position="246"/>
    </location>
</feature>
<feature type="active site" description="Proton donor" evidence="1">
    <location>
        <position position="205"/>
    </location>
</feature>
<feature type="active site" description="Nucleophile" evidence="1">
    <location>
        <position position="226"/>
    </location>
</feature>
<feature type="binding site" evidence="1">
    <location>
        <position position="152"/>
    </location>
    <ligand>
        <name>substrate</name>
    </ligand>
</feature>
<feature type="site" description="Transition state stabilizer" evidence="1">
    <location>
        <position position="204"/>
    </location>
</feature>
<feature type="glycosylation site" description="N-linked (GlcNAc...) asparagine" evidence="2">
    <location>
        <position position="127"/>
    </location>
</feature>
<feature type="glycosylation site" description="N-linked (GlcNAc...) asparagine" evidence="2">
    <location>
        <position position="143"/>
    </location>
</feature>
<feature type="glycosylation site" description="N-linked (GlcNAc...) asparagine" evidence="2">
    <location>
        <position position="174"/>
    </location>
</feature>
<comment type="function">
    <text evidence="1">Acts in the modification of cell walls via demethylesterification of cell wall pectin.</text>
</comment>
<comment type="catalytic activity">
    <reaction>
        <text>[(1-&gt;4)-alpha-D-galacturonosyl methyl ester](n) + n H2O = [(1-&gt;4)-alpha-D-galacturonosyl](n) + n methanol + n H(+)</text>
        <dbReference type="Rhea" id="RHEA:22380"/>
        <dbReference type="Rhea" id="RHEA-COMP:14570"/>
        <dbReference type="Rhea" id="RHEA-COMP:14573"/>
        <dbReference type="ChEBI" id="CHEBI:15377"/>
        <dbReference type="ChEBI" id="CHEBI:15378"/>
        <dbReference type="ChEBI" id="CHEBI:17790"/>
        <dbReference type="ChEBI" id="CHEBI:140522"/>
        <dbReference type="ChEBI" id="CHEBI:140523"/>
        <dbReference type="EC" id="3.1.1.11"/>
    </reaction>
</comment>
<comment type="pathway">
    <text>Glycan metabolism; pectin degradation; 2-dehydro-3-deoxy-D-gluconate from pectin: step 1/5.</text>
</comment>
<comment type="similarity">
    <text evidence="3">Belongs to the pectinesterase family.</text>
</comment>
<comment type="sequence caution" evidence="3">
    <conflict type="erroneous gene model prediction">
        <sequence resource="EMBL-CDS" id="AAF69174"/>
    </conflict>
</comment>
<reference key="1">
    <citation type="journal article" date="2000" name="Nature">
        <title>Sequence and analysis of chromosome 1 of the plant Arabidopsis thaliana.</title>
        <authorList>
            <person name="Theologis A."/>
            <person name="Ecker J.R."/>
            <person name="Palm C.J."/>
            <person name="Federspiel N.A."/>
            <person name="Kaul S."/>
            <person name="White O."/>
            <person name="Alonso J."/>
            <person name="Altafi H."/>
            <person name="Araujo R."/>
            <person name="Bowman C.L."/>
            <person name="Brooks S.Y."/>
            <person name="Buehler E."/>
            <person name="Chan A."/>
            <person name="Chao Q."/>
            <person name="Chen H."/>
            <person name="Cheuk R.F."/>
            <person name="Chin C.W."/>
            <person name="Chung M.K."/>
            <person name="Conn L."/>
            <person name="Conway A.B."/>
            <person name="Conway A.R."/>
            <person name="Creasy T.H."/>
            <person name="Dewar K."/>
            <person name="Dunn P."/>
            <person name="Etgu P."/>
            <person name="Feldblyum T.V."/>
            <person name="Feng J.-D."/>
            <person name="Fong B."/>
            <person name="Fujii C.Y."/>
            <person name="Gill J.E."/>
            <person name="Goldsmith A.D."/>
            <person name="Haas B."/>
            <person name="Hansen N.F."/>
            <person name="Hughes B."/>
            <person name="Huizar L."/>
            <person name="Hunter J.L."/>
            <person name="Jenkins J."/>
            <person name="Johnson-Hopson C."/>
            <person name="Khan S."/>
            <person name="Khaykin E."/>
            <person name="Kim C.J."/>
            <person name="Koo H.L."/>
            <person name="Kremenetskaia I."/>
            <person name="Kurtz D.B."/>
            <person name="Kwan A."/>
            <person name="Lam B."/>
            <person name="Langin-Hooper S."/>
            <person name="Lee A."/>
            <person name="Lee J.M."/>
            <person name="Lenz C.A."/>
            <person name="Li J.H."/>
            <person name="Li Y.-P."/>
            <person name="Lin X."/>
            <person name="Liu S.X."/>
            <person name="Liu Z.A."/>
            <person name="Luros J.S."/>
            <person name="Maiti R."/>
            <person name="Marziali A."/>
            <person name="Militscher J."/>
            <person name="Miranda M."/>
            <person name="Nguyen M."/>
            <person name="Nierman W.C."/>
            <person name="Osborne B.I."/>
            <person name="Pai G."/>
            <person name="Peterson J."/>
            <person name="Pham P.K."/>
            <person name="Rizzo M."/>
            <person name="Rooney T."/>
            <person name="Rowley D."/>
            <person name="Sakano H."/>
            <person name="Salzberg S.L."/>
            <person name="Schwartz J.R."/>
            <person name="Shinn P."/>
            <person name="Southwick A.M."/>
            <person name="Sun H."/>
            <person name="Tallon L.J."/>
            <person name="Tambunga G."/>
            <person name="Toriumi M.J."/>
            <person name="Town C.D."/>
            <person name="Utterback T."/>
            <person name="Van Aken S."/>
            <person name="Vaysberg M."/>
            <person name="Vysotskaia V.S."/>
            <person name="Walker M."/>
            <person name="Wu D."/>
            <person name="Yu G."/>
            <person name="Fraser C.M."/>
            <person name="Venter J.C."/>
            <person name="Davis R.W."/>
        </authorList>
    </citation>
    <scope>NUCLEOTIDE SEQUENCE [LARGE SCALE GENOMIC DNA]</scope>
    <source>
        <strain>cv. Columbia</strain>
    </source>
</reference>
<reference key="2">
    <citation type="journal article" date="2017" name="Plant J.">
        <title>Araport11: a complete reannotation of the Arabidopsis thaliana reference genome.</title>
        <authorList>
            <person name="Cheng C.Y."/>
            <person name="Krishnakumar V."/>
            <person name="Chan A.P."/>
            <person name="Thibaud-Nissen F."/>
            <person name="Schobel S."/>
            <person name="Town C.D."/>
        </authorList>
    </citation>
    <scope>GENOME REANNOTATION</scope>
    <source>
        <strain>cv. Columbia</strain>
    </source>
</reference>
<reference key="3">
    <citation type="journal article" date="2004" name="Carbohydr. Res.">
        <title>Pectin methylesterases: sequence-structural features and phylogenetic relationships.</title>
        <authorList>
            <person name="Markovic O."/>
            <person name="Janecek S."/>
        </authorList>
    </citation>
    <scope>GENE FAMILY</scope>
    <scope>NOMENCLATURE</scope>
</reference>
<sequence>MAMIGVMEDSKLHEDMENDMLGDLTSRAREALALFISISLRDNTELNLVVPNGPSWLSHVDKKDLYLNDETLKKITDILVAKDVTGNYNIVNVAIAAAPQHSQKRFVIYIKTSIYVEIVVIGNMKSNLTLIADGQDSTIITFNLSSSNSKRTFNTATFASNGDGFIRVDMCFRNTTWPVKGPVVTLRVNGDMSIIYRCRVEEYQDALYPHKNRQCYREYFLMDTVDFICGNAAAVFQFCQIVHMDG</sequence>
<proteinExistence type="inferred from homology"/>
<protein>
    <recommendedName>
        <fullName>Putative pectinesterase 57</fullName>
        <shortName>PE 57</shortName>
        <ecNumber>3.1.1.11</ecNumber>
    </recommendedName>
    <alternativeName>
        <fullName>Pectin methylesterase 57</fullName>
        <shortName>AtPME57</shortName>
    </alternativeName>
</protein>
<gene>
    <name type="primary">PME57</name>
    <name type="synonym">ARATH57</name>
    <name type="ordered locus">At1g44980</name>
    <name type="ORF">F27F5.7</name>
</gene>
<accession>Q9MAL0</accession>
<organism>
    <name type="scientific">Arabidopsis thaliana</name>
    <name type="common">Mouse-ear cress</name>
    <dbReference type="NCBI Taxonomy" id="3702"/>
    <lineage>
        <taxon>Eukaryota</taxon>
        <taxon>Viridiplantae</taxon>
        <taxon>Streptophyta</taxon>
        <taxon>Embryophyta</taxon>
        <taxon>Tracheophyta</taxon>
        <taxon>Spermatophyta</taxon>
        <taxon>Magnoliopsida</taxon>
        <taxon>eudicotyledons</taxon>
        <taxon>Gunneridae</taxon>
        <taxon>Pentapetalae</taxon>
        <taxon>rosids</taxon>
        <taxon>malvids</taxon>
        <taxon>Brassicales</taxon>
        <taxon>Brassicaceae</taxon>
        <taxon>Camelineae</taxon>
        <taxon>Arabidopsis</taxon>
    </lineage>
</organism>
<keyword id="KW-0063">Aspartyl esterase</keyword>
<keyword id="KW-0325">Glycoprotein</keyword>
<keyword id="KW-0378">Hydrolase</keyword>
<keyword id="KW-1185">Reference proteome</keyword>
<name>PME57_ARATH</name>
<dbReference type="EC" id="3.1.1.11"/>
<dbReference type="EMBL" id="AC007915">
    <property type="protein sequence ID" value="AAF69174.1"/>
    <property type="status" value="ALT_SEQ"/>
    <property type="molecule type" value="Genomic_DNA"/>
</dbReference>
<dbReference type="EMBL" id="CP002684">
    <property type="protein sequence ID" value="AEE32070.1"/>
    <property type="molecule type" value="Genomic_DNA"/>
</dbReference>
<dbReference type="PIR" id="H96508">
    <property type="entry name" value="H96508"/>
</dbReference>
<dbReference type="SMR" id="Q9MAL0"/>
<dbReference type="BioGRID" id="26288">
    <property type="interactions" value="1"/>
</dbReference>
<dbReference type="FunCoup" id="Q9MAL0">
    <property type="interactions" value="3"/>
</dbReference>
<dbReference type="STRING" id="3702.Q9MAL0"/>
<dbReference type="GlyCosmos" id="Q9MAL0">
    <property type="glycosylation" value="3 sites, No reported glycans"/>
</dbReference>
<dbReference type="GlyGen" id="Q9MAL0">
    <property type="glycosylation" value="3 sites"/>
</dbReference>
<dbReference type="PaxDb" id="3702-AT1G44980.1"/>
<dbReference type="EnsemblPlants" id="AT1G44980.1">
    <property type="protein sequence ID" value="AT1G44980.1"/>
    <property type="gene ID" value="AT1G44980"/>
</dbReference>
<dbReference type="GeneID" id="841063"/>
<dbReference type="Gramene" id="AT1G44980.1">
    <property type="protein sequence ID" value="AT1G44980.1"/>
    <property type="gene ID" value="AT1G44980"/>
</dbReference>
<dbReference type="KEGG" id="ath:AT1G44980"/>
<dbReference type="Araport" id="AT1G44980"/>
<dbReference type="TAIR" id="AT1G44980">
    <property type="gene designation" value="PME7"/>
</dbReference>
<dbReference type="eggNOG" id="ENOG502QUQ5">
    <property type="taxonomic scope" value="Eukaryota"/>
</dbReference>
<dbReference type="HOGENOM" id="CLU_1130412_0_0_1"/>
<dbReference type="InParanoid" id="Q9MAL0"/>
<dbReference type="OMA" id="LHEDMEN"/>
<dbReference type="PhylomeDB" id="Q9MAL0"/>
<dbReference type="BioCyc" id="ARA:AT1G44980-MONOMER"/>
<dbReference type="UniPathway" id="UPA00545">
    <property type="reaction ID" value="UER00823"/>
</dbReference>
<dbReference type="PRO" id="PR:Q9MAL0"/>
<dbReference type="Proteomes" id="UP000006548">
    <property type="component" value="Chromosome 1"/>
</dbReference>
<dbReference type="ExpressionAtlas" id="Q9MAL0">
    <property type="expression patterns" value="differential"/>
</dbReference>
<dbReference type="GO" id="GO:0030599">
    <property type="term" value="F:pectinesterase activity"/>
    <property type="evidence" value="ECO:0007669"/>
    <property type="project" value="UniProtKB-EC"/>
</dbReference>
<dbReference type="GO" id="GO:0042545">
    <property type="term" value="P:cell wall modification"/>
    <property type="evidence" value="ECO:0007669"/>
    <property type="project" value="InterPro"/>
</dbReference>
<dbReference type="GO" id="GO:0045490">
    <property type="term" value="P:pectin catabolic process"/>
    <property type="evidence" value="ECO:0007669"/>
    <property type="project" value="UniProtKB-UniPathway"/>
</dbReference>
<dbReference type="FunFam" id="2.160.20.10:FF:000092">
    <property type="entry name" value="Putative pectinesterase 57"/>
    <property type="match status" value="1"/>
</dbReference>
<dbReference type="Gene3D" id="2.160.20.10">
    <property type="entry name" value="Single-stranded right-handed beta-helix, Pectin lyase-like"/>
    <property type="match status" value="1"/>
</dbReference>
<dbReference type="InterPro" id="IPR012334">
    <property type="entry name" value="Pectin_lyas_fold"/>
</dbReference>
<dbReference type="InterPro" id="IPR011050">
    <property type="entry name" value="Pectin_lyase_fold/virulence"/>
</dbReference>
<dbReference type="InterPro" id="IPR000070">
    <property type="entry name" value="Pectinesterase_cat"/>
</dbReference>
<dbReference type="PANTHER" id="PTHR31707">
    <property type="entry name" value="PECTINESTERASE"/>
    <property type="match status" value="1"/>
</dbReference>
<dbReference type="Pfam" id="PF01095">
    <property type="entry name" value="Pectinesterase"/>
    <property type="match status" value="1"/>
</dbReference>
<dbReference type="SUPFAM" id="SSF51126">
    <property type="entry name" value="Pectin lyase-like"/>
    <property type="match status" value="1"/>
</dbReference>